<comment type="function">
    <text evidence="1">Component of the ERMES/MDM complex, which serves as a molecular tether to connect the endoplasmic reticulum and mitochondria. Components of this complex are involved in the control of mitochondrial shape and protein biogenesis and may function in phospholipid exchange. MDM10 is involved in the late assembly steps of the general translocase of the mitochondrial outer membrane (TOM complex). Functions in the TOM40-specific route of the assembly of outer membrane beta-barrel proteins, including the association of TOM40 with the receptor TOM22 and small TOM proteins. Can associate with the SAM(core) complex as well as the MDM12-MMM1 complex, both involved in late steps of the major beta-barrel assembly pathway, that is responsible for biogenesis of all outer membrane beta-barrel proteins. May act as a switch that shuttles between both complexes and channels precursor proteins into the TOM40-specific pathway. Plays a role in mitochondrial morphology and in the inheritance of mitochondria.</text>
</comment>
<comment type="subunit">
    <text evidence="1">Component of the ER-mitochondria encounter structure (ERMES) or MDM complex, composed of MMM1, MDM10, MDM12 and MDM34. Associates with the mitochondrial outer membrane sorting assembly machinery SAM(core) complex.</text>
</comment>
<comment type="subcellular location">
    <subcellularLocation>
        <location evidence="1">Mitochondrion outer membrane</location>
        <topology evidence="1">Multi-pass membrane protein</topology>
    </subcellularLocation>
    <text evidence="1">The ERMES/MDM complex localizes to a few discrete foci (around 10 per single cell), that represent mitochondria-endoplasmic reticulum junctions. These foci are often found next to mtDNA nucleoids.</text>
</comment>
<comment type="domain">
    <text>Lacks alpha-helical transmembrane segments, suggesting that it resides in the membrane via beta-sheet conformations similar to those predicted for other outer membrane proteins and porin.</text>
</comment>
<comment type="similarity">
    <text evidence="1">Belongs to the MDM10 family.</text>
</comment>
<gene>
    <name evidence="1" type="primary">MDM10</name>
    <name type="synonym">RGS27</name>
    <name type="ordered locus">Pa_7_11600</name>
    <name type="ORF">PODANS_7_11600</name>
</gene>
<evidence type="ECO:0000255" key="1">
    <source>
        <dbReference type="HAMAP-Rule" id="MF_03102"/>
    </source>
</evidence>
<evidence type="ECO:0000269" key="2">
    <source>
    </source>
</evidence>
<name>MDM10_PODAN</name>
<feature type="chain" id="PRO_0000384195" description="Mitochondrial distribution and morphology protein 10">
    <location>
        <begin position="1"/>
        <end position="448"/>
    </location>
</feature>
<feature type="mutagenesis site" description="In MDM10-1; produces giant mitochondria and results in the accumulation of specific deleted mitochondrial genomes during the senescence process of the fungus." evidence="2">
    <original>L</original>
    <variation>P</variation>
    <location>
        <position position="420"/>
    </location>
</feature>
<proteinExistence type="evidence at protein level"/>
<organism>
    <name type="scientific">Podospora anserina (strain S / ATCC MYA-4624 / DSM 980 / FGSC 10383)</name>
    <name type="common">Pleurage anserina</name>
    <dbReference type="NCBI Taxonomy" id="515849"/>
    <lineage>
        <taxon>Eukaryota</taxon>
        <taxon>Fungi</taxon>
        <taxon>Dikarya</taxon>
        <taxon>Ascomycota</taxon>
        <taxon>Pezizomycotina</taxon>
        <taxon>Sordariomycetes</taxon>
        <taxon>Sordariomycetidae</taxon>
        <taxon>Sordariales</taxon>
        <taxon>Podosporaceae</taxon>
        <taxon>Podospora</taxon>
        <taxon>Podospora anserina</taxon>
    </lineage>
</organism>
<protein>
    <recommendedName>
        <fullName evidence="1">Mitochondrial distribution and morphology protein 10</fullName>
    </recommendedName>
    <alternativeName>
        <fullName evidence="1">Mitochondrial inheritance component MDM10</fullName>
    </alternativeName>
</protein>
<keyword id="KW-0472">Membrane</keyword>
<keyword id="KW-0496">Mitochondrion</keyword>
<keyword id="KW-1000">Mitochondrion outer membrane</keyword>
<keyword id="KW-1185">Reference proteome</keyword>
<keyword id="KW-0812">Transmembrane</keyword>
<keyword id="KW-1134">Transmembrane beta strand</keyword>
<dbReference type="EMBL" id="Y14749">
    <property type="protein sequence ID" value="CAA75046.1"/>
    <property type="molecule type" value="Genomic_DNA"/>
</dbReference>
<dbReference type="EMBL" id="CU633900">
    <property type="protein sequence ID" value="CAP69204.1"/>
    <property type="molecule type" value="Genomic_DNA"/>
</dbReference>
<dbReference type="EMBL" id="FO904942">
    <property type="protein sequence ID" value="CDP32685.1"/>
    <property type="molecule type" value="Genomic_DNA"/>
</dbReference>
<dbReference type="RefSeq" id="XP_001908531.1">
    <property type="nucleotide sequence ID" value="XM_001908496.1"/>
</dbReference>
<dbReference type="SMR" id="O13498"/>
<dbReference type="FunCoup" id="O13498">
    <property type="interactions" value="52"/>
</dbReference>
<dbReference type="STRING" id="515849.O13498"/>
<dbReference type="GeneID" id="6192148"/>
<dbReference type="KEGG" id="pan:PODANSg5566"/>
<dbReference type="VEuPathDB" id="FungiDB:PODANS_7_11600"/>
<dbReference type="eggNOG" id="ENOG502QUN5">
    <property type="taxonomic scope" value="Eukaryota"/>
</dbReference>
<dbReference type="HOGENOM" id="CLU_026505_1_0_1"/>
<dbReference type="InParanoid" id="O13498"/>
<dbReference type="OrthoDB" id="2103793at2759"/>
<dbReference type="Proteomes" id="UP000001197">
    <property type="component" value="Chromosome 7"/>
</dbReference>
<dbReference type="GO" id="GO:0032865">
    <property type="term" value="C:ERMES complex"/>
    <property type="evidence" value="ECO:0007669"/>
    <property type="project" value="UniProtKB-UniRule"/>
</dbReference>
<dbReference type="GO" id="GO:0001401">
    <property type="term" value="C:SAM complex"/>
    <property type="evidence" value="ECO:0007669"/>
    <property type="project" value="TreeGrafter"/>
</dbReference>
<dbReference type="GO" id="GO:0051654">
    <property type="term" value="P:establishment of mitochondrion localization"/>
    <property type="evidence" value="ECO:0007669"/>
    <property type="project" value="TreeGrafter"/>
</dbReference>
<dbReference type="GO" id="GO:0000002">
    <property type="term" value="P:mitochondrial genome maintenance"/>
    <property type="evidence" value="ECO:0007669"/>
    <property type="project" value="UniProtKB-UniRule"/>
</dbReference>
<dbReference type="GO" id="GO:0070096">
    <property type="term" value="P:mitochondrial outer membrane translocase complex assembly"/>
    <property type="evidence" value="ECO:0007669"/>
    <property type="project" value="UniProtKB-UniRule"/>
</dbReference>
<dbReference type="GO" id="GO:1990456">
    <property type="term" value="P:mitochondrion-endoplasmic reticulum membrane tethering"/>
    <property type="evidence" value="ECO:0007669"/>
    <property type="project" value="UniProtKB-UniRule"/>
</dbReference>
<dbReference type="GO" id="GO:0015914">
    <property type="term" value="P:phospholipid transport"/>
    <property type="evidence" value="ECO:0007669"/>
    <property type="project" value="TreeGrafter"/>
</dbReference>
<dbReference type="GO" id="GO:0045040">
    <property type="term" value="P:protein insertion into mitochondrial outer membrane"/>
    <property type="evidence" value="ECO:0007669"/>
    <property type="project" value="UniProtKB-UniRule"/>
</dbReference>
<dbReference type="HAMAP" id="MF_03102">
    <property type="entry name" value="Mdm10"/>
    <property type="match status" value="1"/>
</dbReference>
<dbReference type="InterPro" id="IPR027539">
    <property type="entry name" value="Mdm10"/>
</dbReference>
<dbReference type="PANTHER" id="PTHR28035">
    <property type="entry name" value="MITOCHONDRIAL DISTRIBUTION AND MORPHOLOGY PROTEIN 10"/>
    <property type="match status" value="1"/>
</dbReference>
<dbReference type="PANTHER" id="PTHR28035:SF1">
    <property type="entry name" value="MITOCHONDRIAL DISTRIBUTION AND MORPHOLOGY PROTEIN 10"/>
    <property type="match status" value="1"/>
</dbReference>
<dbReference type="Pfam" id="PF12519">
    <property type="entry name" value="MDM10"/>
    <property type="match status" value="1"/>
</dbReference>
<accession>O13498</accession>
<accession>A0A090CUH5</accession>
<reference key="1">
    <citation type="journal article" date="1997" name="Mol. Cell. Biol.">
        <title>Mutations in genes encoding the mitochondrial outer membrane proteins Tom70 and Mdm10 of Podospora anserina modify the spectrum of mitochondrial DNA rearrangements associated with cellular death.</title>
        <authorList>
            <person name="Jamet-Vierny C."/>
            <person name="Contamine V."/>
            <person name="Boulay J."/>
            <person name="Zickler D."/>
            <person name="Picard M."/>
        </authorList>
    </citation>
    <scope>NUCLEOTIDE SEQUENCE [GENOMIC DNA]</scope>
    <scope>MUTAGENESIS OF LEU-420</scope>
</reference>
<reference key="2">
    <citation type="journal article" date="2008" name="Genome Biol.">
        <title>The genome sequence of the model ascomycete fungus Podospora anserina.</title>
        <authorList>
            <person name="Espagne E."/>
            <person name="Lespinet O."/>
            <person name="Malagnac F."/>
            <person name="Da Silva C."/>
            <person name="Jaillon O."/>
            <person name="Porcel B.M."/>
            <person name="Couloux A."/>
            <person name="Aury J.-M."/>
            <person name="Segurens B."/>
            <person name="Poulain J."/>
            <person name="Anthouard V."/>
            <person name="Grossetete S."/>
            <person name="Khalili H."/>
            <person name="Coppin E."/>
            <person name="Dequard-Chablat M."/>
            <person name="Picard M."/>
            <person name="Contamine V."/>
            <person name="Arnaise S."/>
            <person name="Bourdais A."/>
            <person name="Berteaux-Lecellier V."/>
            <person name="Gautheret D."/>
            <person name="de Vries R.P."/>
            <person name="Battaglia E."/>
            <person name="Coutinho P.M."/>
            <person name="Danchin E.G.J."/>
            <person name="Henrissat B."/>
            <person name="El Khoury R."/>
            <person name="Sainsard-Chanet A."/>
            <person name="Boivin A."/>
            <person name="Pinan-Lucarre B."/>
            <person name="Sellem C.H."/>
            <person name="Debuchy R."/>
            <person name="Wincker P."/>
            <person name="Weissenbach J."/>
            <person name="Silar P."/>
        </authorList>
    </citation>
    <scope>NUCLEOTIDE SEQUENCE [LARGE SCALE GENOMIC DNA]</scope>
    <source>
        <strain>S / ATCC MYA-4624 / DSM 980 / FGSC 10383</strain>
    </source>
</reference>
<reference key="3">
    <citation type="journal article" date="2014" name="Genetics">
        <title>Maintaining two mating types: Structure of the mating type locus and its role in heterokaryosis in Podospora anserina.</title>
        <authorList>
            <person name="Grognet P."/>
            <person name="Bidard F."/>
            <person name="Kuchly C."/>
            <person name="Tong L.C.H."/>
            <person name="Coppin E."/>
            <person name="Benkhali J.A."/>
            <person name="Couloux A."/>
            <person name="Wincker P."/>
            <person name="Debuchy R."/>
            <person name="Silar P."/>
        </authorList>
    </citation>
    <scope>GENOME REANNOTATION</scope>
    <source>
        <strain>S / ATCC MYA-4624 / DSM 980 / FGSC 10383</strain>
    </source>
</reference>
<sequence>MREFMQYVRNAFYGATGWSEDNSYKDLNVTARELIDFPLPRGIRLSLSSLATPHFATSYQLCNVGVVDGSISYLHSSVPLAAVPAQSNKIPLGALMRSYRGLHQLGSRGGTPWSWETGPQIGTIPQVPAVADMGQIPNKDKSSLLYGRLYLPQSLLEAMVIKRFSPALQVQISAVSEQSLRNGGTMLSVVQYDRGKYGVEGLYSTDGGLLGLRGLYNFGGDASVAVMSSQNGTGSPESTEKERIYGRFSAGGEMYYGTLNKSGGMSLGARFATLPTHKGTPLTATLTINPLMGNINTTYAVLAKDFLAMATRMEFNAYSYESDWAVGLELWSNRRPAGFLLGAEPSLDLESDQPELPSKKERSFQAKMEWRLDDPEPEPEPVKIAEKPTEGKEEYLGVFKARLSSNLDLGLVWEGRAKSLIFSLGTGVDLQRLGEPFRSLGLEVQYSS</sequence>